<dbReference type="EMBL" id="AP008229">
    <property type="protein sequence ID" value="BAE70134.1"/>
    <property type="molecule type" value="Genomic_DNA"/>
</dbReference>
<dbReference type="RefSeq" id="WP_003486703.1">
    <property type="nucleotide sequence ID" value="NC_007705.1"/>
</dbReference>
<dbReference type="SMR" id="Q2NZZ3"/>
<dbReference type="GeneID" id="97509344"/>
<dbReference type="KEGG" id="xom:XOO3379"/>
<dbReference type="HOGENOM" id="CLU_158491_1_2_6"/>
<dbReference type="GO" id="GO:0022625">
    <property type="term" value="C:cytosolic large ribosomal subunit"/>
    <property type="evidence" value="ECO:0007669"/>
    <property type="project" value="TreeGrafter"/>
</dbReference>
<dbReference type="GO" id="GO:0003735">
    <property type="term" value="F:structural constituent of ribosome"/>
    <property type="evidence" value="ECO:0007669"/>
    <property type="project" value="InterPro"/>
</dbReference>
<dbReference type="GO" id="GO:0006412">
    <property type="term" value="P:translation"/>
    <property type="evidence" value="ECO:0007669"/>
    <property type="project" value="UniProtKB-UniRule"/>
</dbReference>
<dbReference type="CDD" id="cd00427">
    <property type="entry name" value="Ribosomal_L29_HIP"/>
    <property type="match status" value="1"/>
</dbReference>
<dbReference type="FunFam" id="1.10.287.310:FF:000001">
    <property type="entry name" value="50S ribosomal protein L29"/>
    <property type="match status" value="1"/>
</dbReference>
<dbReference type="Gene3D" id="1.10.287.310">
    <property type="match status" value="1"/>
</dbReference>
<dbReference type="HAMAP" id="MF_00374">
    <property type="entry name" value="Ribosomal_uL29"/>
    <property type="match status" value="1"/>
</dbReference>
<dbReference type="InterPro" id="IPR050063">
    <property type="entry name" value="Ribosomal_protein_uL29"/>
</dbReference>
<dbReference type="InterPro" id="IPR001854">
    <property type="entry name" value="Ribosomal_uL29"/>
</dbReference>
<dbReference type="InterPro" id="IPR036049">
    <property type="entry name" value="Ribosomal_uL29_sf"/>
</dbReference>
<dbReference type="NCBIfam" id="TIGR00012">
    <property type="entry name" value="L29"/>
    <property type="match status" value="1"/>
</dbReference>
<dbReference type="PANTHER" id="PTHR10916">
    <property type="entry name" value="60S RIBOSOMAL PROTEIN L35/50S RIBOSOMAL PROTEIN L29"/>
    <property type="match status" value="1"/>
</dbReference>
<dbReference type="PANTHER" id="PTHR10916:SF0">
    <property type="entry name" value="LARGE RIBOSOMAL SUBUNIT PROTEIN UL29C"/>
    <property type="match status" value="1"/>
</dbReference>
<dbReference type="Pfam" id="PF00831">
    <property type="entry name" value="Ribosomal_L29"/>
    <property type="match status" value="1"/>
</dbReference>
<dbReference type="SUPFAM" id="SSF46561">
    <property type="entry name" value="Ribosomal protein L29 (L29p)"/>
    <property type="match status" value="1"/>
</dbReference>
<evidence type="ECO:0000255" key="1">
    <source>
        <dbReference type="HAMAP-Rule" id="MF_00374"/>
    </source>
</evidence>
<evidence type="ECO:0000305" key="2"/>
<gene>
    <name evidence="1" type="primary">rpmC</name>
    <name type="ordered locus">XOO3379</name>
</gene>
<feature type="chain" id="PRO_1000007655" description="Large ribosomal subunit protein uL29">
    <location>
        <begin position="1"/>
        <end position="61"/>
    </location>
</feature>
<name>RL29_XANOM</name>
<comment type="similarity">
    <text evidence="1">Belongs to the universal ribosomal protein uL29 family.</text>
</comment>
<proteinExistence type="inferred from homology"/>
<keyword id="KW-0687">Ribonucleoprotein</keyword>
<keyword id="KW-0689">Ribosomal protein</keyword>
<reference key="1">
    <citation type="journal article" date="2005" name="Jpn. Agric. Res. Q.">
        <title>Genome sequence of Xanthomonas oryzae pv. oryzae suggests contribution of large numbers of effector genes and insertion sequences to its race diversity.</title>
        <authorList>
            <person name="Ochiai H."/>
            <person name="Inoue Y."/>
            <person name="Takeya M."/>
            <person name="Sasaki A."/>
            <person name="Kaku H."/>
        </authorList>
    </citation>
    <scope>NUCLEOTIDE SEQUENCE [LARGE SCALE GENOMIC DNA]</scope>
    <source>
        <strain>MAFF 311018</strain>
    </source>
</reference>
<accession>Q2NZZ3</accession>
<sequence>MDIKQLREKSADELKAHLTDLRKEQFSLRMQQVTGQLPKTHETRRVRREIARVKHLLGSTK</sequence>
<organism>
    <name type="scientific">Xanthomonas oryzae pv. oryzae (strain MAFF 311018)</name>
    <dbReference type="NCBI Taxonomy" id="342109"/>
    <lineage>
        <taxon>Bacteria</taxon>
        <taxon>Pseudomonadati</taxon>
        <taxon>Pseudomonadota</taxon>
        <taxon>Gammaproteobacteria</taxon>
        <taxon>Lysobacterales</taxon>
        <taxon>Lysobacteraceae</taxon>
        <taxon>Xanthomonas</taxon>
    </lineage>
</organism>
<protein>
    <recommendedName>
        <fullName evidence="1">Large ribosomal subunit protein uL29</fullName>
    </recommendedName>
    <alternativeName>
        <fullName evidence="2">50S ribosomal protein L29</fullName>
    </alternativeName>
</protein>